<evidence type="ECO:0000255" key="1">
    <source>
        <dbReference type="HAMAP-Rule" id="MF_01389"/>
    </source>
</evidence>
<gene>
    <name evidence="1" type="primary">ureG1</name>
    <name type="ordered locus">BMEI1649</name>
</gene>
<protein>
    <recommendedName>
        <fullName evidence="1">Urease accessory protein UreG 1</fullName>
    </recommendedName>
</protein>
<name>UREG1_BRUME</name>
<proteinExistence type="inferred from homology"/>
<feature type="chain" id="PRO_0000347360" description="Urease accessory protein UreG 1">
    <location>
        <begin position="1"/>
        <end position="208"/>
    </location>
</feature>
<feature type="binding site" evidence="1">
    <location>
        <begin position="14"/>
        <end position="21"/>
    </location>
    <ligand>
        <name>GTP</name>
        <dbReference type="ChEBI" id="CHEBI:37565"/>
    </ligand>
</feature>
<accession>Q7CNT4</accession>
<comment type="function">
    <text evidence="1">Facilitates the functional incorporation of the urease nickel metallocenter. This process requires GTP hydrolysis, probably effectuated by UreG.</text>
</comment>
<comment type="subunit">
    <text evidence="1">Homodimer. UreD, UreF and UreG form a complex that acts as a GTP-hydrolysis-dependent molecular chaperone, activating the urease apoprotein by helping to assemble the nickel containing metallocenter of UreC. The UreE protein probably delivers the nickel.</text>
</comment>
<comment type="subcellular location">
    <subcellularLocation>
        <location evidence="1">Cytoplasm</location>
    </subcellularLocation>
</comment>
<comment type="similarity">
    <text evidence="1">Belongs to the SIMIBI class G3E GTPase family. UreG subfamily.</text>
</comment>
<reference key="1">
    <citation type="journal article" date="2002" name="Proc. Natl. Acad. Sci. U.S.A.">
        <title>The genome sequence of the facultative intracellular pathogen Brucella melitensis.</title>
        <authorList>
            <person name="DelVecchio V.G."/>
            <person name="Kapatral V."/>
            <person name="Redkar R.J."/>
            <person name="Patra G."/>
            <person name="Mujer C."/>
            <person name="Los T."/>
            <person name="Ivanova N."/>
            <person name="Anderson I."/>
            <person name="Bhattacharyya A."/>
            <person name="Lykidis A."/>
            <person name="Reznik G."/>
            <person name="Jablonski L."/>
            <person name="Larsen N."/>
            <person name="D'Souza M."/>
            <person name="Bernal A."/>
            <person name="Mazur M."/>
            <person name="Goltsman E."/>
            <person name="Selkov E."/>
            <person name="Elzer P.H."/>
            <person name="Hagius S."/>
            <person name="O'Callaghan D."/>
            <person name="Letesson J.-J."/>
            <person name="Haselkorn R."/>
            <person name="Kyrpides N.C."/>
            <person name="Overbeek R."/>
        </authorList>
    </citation>
    <scope>NUCLEOTIDE SEQUENCE [LARGE SCALE GENOMIC DNA]</scope>
    <source>
        <strain>ATCC 23456 / CCUG 17765 / NCTC 10094 / 16M</strain>
    </source>
</reference>
<organism>
    <name type="scientific">Brucella melitensis biotype 1 (strain ATCC 23456 / CCUG 17765 / NCTC 10094 / 16M)</name>
    <dbReference type="NCBI Taxonomy" id="224914"/>
    <lineage>
        <taxon>Bacteria</taxon>
        <taxon>Pseudomonadati</taxon>
        <taxon>Pseudomonadota</taxon>
        <taxon>Alphaproteobacteria</taxon>
        <taxon>Hyphomicrobiales</taxon>
        <taxon>Brucellaceae</taxon>
        <taxon>Brucella/Ochrobactrum group</taxon>
        <taxon>Brucella</taxon>
    </lineage>
</organism>
<dbReference type="EMBL" id="AE008917">
    <property type="protein sequence ID" value="AAL52830.1"/>
    <property type="molecule type" value="Genomic_DNA"/>
</dbReference>
<dbReference type="SMR" id="Q7CNT4"/>
<dbReference type="KEGG" id="bme:BMEI1649"/>
<dbReference type="KEGG" id="bmel:DK63_1841"/>
<dbReference type="PATRIC" id="fig|224914.52.peg.1942"/>
<dbReference type="eggNOG" id="COG0378">
    <property type="taxonomic scope" value="Bacteria"/>
</dbReference>
<dbReference type="PhylomeDB" id="Q7CNT4"/>
<dbReference type="Proteomes" id="UP000000419">
    <property type="component" value="Chromosome I"/>
</dbReference>
<dbReference type="GO" id="GO:0005737">
    <property type="term" value="C:cytoplasm"/>
    <property type="evidence" value="ECO:0007669"/>
    <property type="project" value="UniProtKB-SubCell"/>
</dbReference>
<dbReference type="GO" id="GO:0005525">
    <property type="term" value="F:GTP binding"/>
    <property type="evidence" value="ECO:0007669"/>
    <property type="project" value="UniProtKB-KW"/>
</dbReference>
<dbReference type="GO" id="GO:0003924">
    <property type="term" value="F:GTPase activity"/>
    <property type="evidence" value="ECO:0007669"/>
    <property type="project" value="InterPro"/>
</dbReference>
<dbReference type="GO" id="GO:0016151">
    <property type="term" value="F:nickel cation binding"/>
    <property type="evidence" value="ECO:0007669"/>
    <property type="project" value="UniProtKB-UniRule"/>
</dbReference>
<dbReference type="GO" id="GO:0043419">
    <property type="term" value="P:urea catabolic process"/>
    <property type="evidence" value="ECO:0007669"/>
    <property type="project" value="InterPro"/>
</dbReference>
<dbReference type="CDD" id="cd05540">
    <property type="entry name" value="UreG"/>
    <property type="match status" value="1"/>
</dbReference>
<dbReference type="FunFam" id="3.40.50.300:FF:000208">
    <property type="entry name" value="Urease accessory protein UreG"/>
    <property type="match status" value="1"/>
</dbReference>
<dbReference type="Gene3D" id="3.40.50.300">
    <property type="entry name" value="P-loop containing nucleotide triphosphate hydrolases"/>
    <property type="match status" value="1"/>
</dbReference>
<dbReference type="HAMAP" id="MF_01389">
    <property type="entry name" value="UreG"/>
    <property type="match status" value="1"/>
</dbReference>
<dbReference type="InterPro" id="IPR003495">
    <property type="entry name" value="CobW/HypB/UreG_nucleotide-bd"/>
</dbReference>
<dbReference type="InterPro" id="IPR027417">
    <property type="entry name" value="P-loop_NTPase"/>
</dbReference>
<dbReference type="InterPro" id="IPR004400">
    <property type="entry name" value="UreG"/>
</dbReference>
<dbReference type="NCBIfam" id="TIGR00101">
    <property type="entry name" value="ureG"/>
    <property type="match status" value="1"/>
</dbReference>
<dbReference type="PANTHER" id="PTHR31715">
    <property type="entry name" value="UREASE ACCESSORY PROTEIN G"/>
    <property type="match status" value="1"/>
</dbReference>
<dbReference type="PANTHER" id="PTHR31715:SF0">
    <property type="entry name" value="UREASE ACCESSORY PROTEIN G"/>
    <property type="match status" value="1"/>
</dbReference>
<dbReference type="Pfam" id="PF02492">
    <property type="entry name" value="cobW"/>
    <property type="match status" value="1"/>
</dbReference>
<dbReference type="PIRSF" id="PIRSF005624">
    <property type="entry name" value="Ni-bind_GTPase"/>
    <property type="match status" value="1"/>
</dbReference>
<dbReference type="SUPFAM" id="SSF52540">
    <property type="entry name" value="P-loop containing nucleoside triphosphate hydrolases"/>
    <property type="match status" value="1"/>
</dbReference>
<sequence>MTQKNGPLRVGIGGPVGSGKTTLTEKLCKAMRDKYSVAVITNDIYTQEDALILARRQALSEDRIIGVETGGCPHTAIREDASINLQAVVEMTRRFPDLDVVFIESGGDNLAATFSPDLADLTLYVISVCQGEEIPRKGGPGITRSDFLVINKSDLAPYVHVDLEVMEADAMRMRAKRPFGFTDLHRGKGVQEIIDFIVENGGLEPRSN</sequence>
<keyword id="KW-0143">Chaperone</keyword>
<keyword id="KW-0963">Cytoplasm</keyword>
<keyword id="KW-0342">GTP-binding</keyword>
<keyword id="KW-0996">Nickel insertion</keyword>
<keyword id="KW-0547">Nucleotide-binding</keyword>